<sequence>MTVIKTEPTTEVTLYSPPSKESLSKDDAHRKKQNNKPPSSINSRSGPNKHKLAAKAPEKKINNTDKQDLSAFLLNPSLIVKPSESKKKENIVAYNDTPGIKTEHTAFQPLTPISKKRALKEKAASEKCDSFDLSRDEKPYIQKKSKTLSSVTEINSSEYKLSLNGENTSSPAKEKSQEPIENPGSYQKTRNYLFEKPDPLDTCLQDYSSMLPSNVAEEDQEYFISVADSTLEEWTNKGQEIIDQQFQLYQEIIKKRIELSYKFKGIISVINDRADALEEQGQQLEGKIKKVKTLANEILNII</sequence>
<proteinExistence type="evidence at protein level"/>
<dbReference type="EMBL" id="U33007">
    <property type="protein sequence ID" value="AAB64870.1"/>
    <property type="molecule type" value="Genomic_DNA"/>
</dbReference>
<dbReference type="EMBL" id="BK006938">
    <property type="protein sequence ID" value="DAA12281.1"/>
    <property type="molecule type" value="Genomic_DNA"/>
</dbReference>
<dbReference type="PIR" id="S69725">
    <property type="entry name" value="S69725"/>
</dbReference>
<dbReference type="RefSeq" id="NP_010734.1">
    <property type="nucleotide sequence ID" value="NM_001180754.1"/>
</dbReference>
<dbReference type="SMR" id="Q04110"/>
<dbReference type="BioGRID" id="32501">
    <property type="interactions" value="46"/>
</dbReference>
<dbReference type="ComplexPortal" id="CPX-1387">
    <property type="entry name" value="Synaptonemal complex"/>
</dbReference>
<dbReference type="ComplexPortal" id="CPX-1407">
    <property type="entry name" value="ECM11-GMC2 synaptonemal assembly activation factor complex"/>
</dbReference>
<dbReference type="DIP" id="DIP-2060N"/>
<dbReference type="FunCoup" id="Q04110">
    <property type="interactions" value="43"/>
</dbReference>
<dbReference type="IntAct" id="Q04110">
    <property type="interactions" value="5"/>
</dbReference>
<dbReference type="STRING" id="4932.YDR446W"/>
<dbReference type="iPTMnet" id="Q04110"/>
<dbReference type="PaxDb" id="4932-YDR446W"/>
<dbReference type="PeptideAtlas" id="Q04110"/>
<dbReference type="EnsemblFungi" id="YDR446W_mRNA">
    <property type="protein sequence ID" value="YDR446W"/>
    <property type="gene ID" value="YDR446W"/>
</dbReference>
<dbReference type="GeneID" id="852057"/>
<dbReference type="KEGG" id="sce:YDR446W"/>
<dbReference type="AGR" id="SGD:S000002854"/>
<dbReference type="SGD" id="S000002854">
    <property type="gene designation" value="ECM11"/>
</dbReference>
<dbReference type="VEuPathDB" id="FungiDB:YDR446W"/>
<dbReference type="eggNOG" id="ENOG502S4IU">
    <property type="taxonomic scope" value="Eukaryota"/>
</dbReference>
<dbReference type="HOGENOM" id="CLU_921822_0_0_1"/>
<dbReference type="InParanoid" id="Q04110"/>
<dbReference type="OMA" id="TEHTAFQ"/>
<dbReference type="OrthoDB" id="4056678at2759"/>
<dbReference type="BioCyc" id="YEAST:G3O-29977-MONOMER"/>
<dbReference type="BioGRID-ORCS" id="852057">
    <property type="hits" value="1 hit in 10 CRISPR screens"/>
</dbReference>
<dbReference type="PRO" id="PR:Q04110"/>
<dbReference type="Proteomes" id="UP000002311">
    <property type="component" value="Chromosome IV"/>
</dbReference>
<dbReference type="RNAct" id="Q04110">
    <property type="molecule type" value="protein"/>
</dbReference>
<dbReference type="GO" id="GO:0000794">
    <property type="term" value="C:condensed nuclear chromosome"/>
    <property type="evidence" value="ECO:0000314"/>
    <property type="project" value="ComplexPortal"/>
</dbReference>
<dbReference type="GO" id="GO:0005634">
    <property type="term" value="C:nucleus"/>
    <property type="evidence" value="ECO:0000314"/>
    <property type="project" value="SGD"/>
</dbReference>
<dbReference type="GO" id="GO:0000795">
    <property type="term" value="C:synaptonemal complex"/>
    <property type="evidence" value="ECO:0000314"/>
    <property type="project" value="SGD"/>
</dbReference>
<dbReference type="GO" id="GO:0071555">
    <property type="term" value="P:cell wall organization"/>
    <property type="evidence" value="ECO:0007669"/>
    <property type="project" value="UniProtKB-KW"/>
</dbReference>
<dbReference type="GO" id="GO:0007129">
    <property type="term" value="P:homologous chromosome pairing at meiosis"/>
    <property type="evidence" value="ECO:0000303"/>
    <property type="project" value="ComplexPortal"/>
</dbReference>
<dbReference type="GO" id="GO:0035825">
    <property type="term" value="P:homologous recombination"/>
    <property type="evidence" value="ECO:0000303"/>
    <property type="project" value="ComplexPortal"/>
</dbReference>
<dbReference type="GO" id="GO:0007131">
    <property type="term" value="P:reciprocal meiotic recombination"/>
    <property type="evidence" value="ECO:0000315"/>
    <property type="project" value="SGD"/>
</dbReference>
<dbReference type="GO" id="GO:1990414">
    <property type="term" value="P:replication-born double-strand break repair via sister chromatid exchange"/>
    <property type="evidence" value="ECO:0000315"/>
    <property type="project" value="SGD"/>
</dbReference>
<dbReference type="GO" id="GO:0007130">
    <property type="term" value="P:synaptonemal complex assembly"/>
    <property type="evidence" value="ECO:0000315"/>
    <property type="project" value="ComplexPortal"/>
</dbReference>
<dbReference type="GO" id="GO:0070193">
    <property type="term" value="P:synaptonemal complex organization"/>
    <property type="evidence" value="ECO:0000315"/>
    <property type="project" value="SGD"/>
</dbReference>
<dbReference type="InterPro" id="IPR029178">
    <property type="entry name" value="Ecm11_C"/>
</dbReference>
<dbReference type="Pfam" id="PF15463">
    <property type="entry name" value="ECM11"/>
    <property type="match status" value="1"/>
</dbReference>
<name>ECM11_YEAST</name>
<comment type="function">
    <text>May be involved in cell wall organization and biogenesis.</text>
</comment>
<comment type="subunit">
    <text evidence="2">Interacts with CDC6.</text>
</comment>
<comment type="interaction">
    <interactant intactId="EBI-37150">
        <id>Q04110</id>
    </interactant>
    <interactant intactId="EBI-3786338">
        <id>Q06201</id>
        <label>GMC2</label>
    </interactant>
    <organismsDiffer>false</organismsDiffer>
    <experiments>4</experiments>
</comment>
<comment type="subcellular location">
    <subcellularLocation>
        <location evidence="3">Nucleus</location>
    </subcellularLocation>
</comment>
<evidence type="ECO:0000256" key="1">
    <source>
        <dbReference type="SAM" id="MobiDB-lite"/>
    </source>
</evidence>
<evidence type="ECO:0000269" key="2">
    <source>
    </source>
</evidence>
<evidence type="ECO:0000269" key="3">
    <source>
    </source>
</evidence>
<reference key="1">
    <citation type="journal article" date="1997" name="Nature">
        <title>The nucleotide sequence of Saccharomyces cerevisiae chromosome IV.</title>
        <authorList>
            <person name="Jacq C."/>
            <person name="Alt-Moerbe J."/>
            <person name="Andre B."/>
            <person name="Arnold W."/>
            <person name="Bahr A."/>
            <person name="Ballesta J.P.G."/>
            <person name="Bargues M."/>
            <person name="Baron L."/>
            <person name="Becker A."/>
            <person name="Biteau N."/>
            <person name="Bloecker H."/>
            <person name="Blugeon C."/>
            <person name="Boskovic J."/>
            <person name="Brandt P."/>
            <person name="Brueckner M."/>
            <person name="Buitrago M.J."/>
            <person name="Coster F."/>
            <person name="Delaveau T."/>
            <person name="del Rey F."/>
            <person name="Dujon B."/>
            <person name="Eide L.G."/>
            <person name="Garcia-Cantalejo J.M."/>
            <person name="Goffeau A."/>
            <person name="Gomez-Peris A."/>
            <person name="Granotier C."/>
            <person name="Hanemann V."/>
            <person name="Hankeln T."/>
            <person name="Hoheisel J.D."/>
            <person name="Jaeger W."/>
            <person name="Jimenez A."/>
            <person name="Jonniaux J.-L."/>
            <person name="Kraemer C."/>
            <person name="Kuester H."/>
            <person name="Laamanen P."/>
            <person name="Legros Y."/>
            <person name="Louis E.J."/>
            <person name="Moeller-Rieker S."/>
            <person name="Monnet A."/>
            <person name="Moro M."/>
            <person name="Mueller-Auer S."/>
            <person name="Nussbaumer B."/>
            <person name="Paricio N."/>
            <person name="Paulin L."/>
            <person name="Perea J."/>
            <person name="Perez-Alonso M."/>
            <person name="Perez-Ortin J.E."/>
            <person name="Pohl T.M."/>
            <person name="Prydz H."/>
            <person name="Purnelle B."/>
            <person name="Rasmussen S.W."/>
            <person name="Remacha M.A."/>
            <person name="Revuelta J.L."/>
            <person name="Rieger M."/>
            <person name="Salom D."/>
            <person name="Saluz H.P."/>
            <person name="Saiz J.E."/>
            <person name="Saren A.-M."/>
            <person name="Schaefer M."/>
            <person name="Scharfe M."/>
            <person name="Schmidt E.R."/>
            <person name="Schneider C."/>
            <person name="Scholler P."/>
            <person name="Schwarz S."/>
            <person name="Soler-Mira A."/>
            <person name="Urrestarazu L.A."/>
            <person name="Verhasselt P."/>
            <person name="Vissers S."/>
            <person name="Voet M."/>
            <person name="Volckaert G."/>
            <person name="Wagner G."/>
            <person name="Wambutt R."/>
            <person name="Wedler E."/>
            <person name="Wedler H."/>
            <person name="Woelfl S."/>
            <person name="Harris D.E."/>
            <person name="Bowman S."/>
            <person name="Brown D."/>
            <person name="Churcher C.M."/>
            <person name="Connor R."/>
            <person name="Dedman K."/>
            <person name="Gentles S."/>
            <person name="Hamlin N."/>
            <person name="Hunt S."/>
            <person name="Jones L."/>
            <person name="McDonald S."/>
            <person name="Murphy L.D."/>
            <person name="Niblett D."/>
            <person name="Odell C."/>
            <person name="Oliver K."/>
            <person name="Rajandream M.A."/>
            <person name="Richards C."/>
            <person name="Shore L."/>
            <person name="Walsh S.V."/>
            <person name="Barrell B.G."/>
            <person name="Dietrich F.S."/>
            <person name="Mulligan J.T."/>
            <person name="Allen E."/>
            <person name="Araujo R."/>
            <person name="Aviles E."/>
            <person name="Berno A."/>
            <person name="Carpenter J."/>
            <person name="Chen E."/>
            <person name="Cherry J.M."/>
            <person name="Chung E."/>
            <person name="Duncan M."/>
            <person name="Hunicke-Smith S."/>
            <person name="Hyman R.W."/>
            <person name="Komp C."/>
            <person name="Lashkari D."/>
            <person name="Lew H."/>
            <person name="Lin D."/>
            <person name="Mosedale D."/>
            <person name="Nakahara K."/>
            <person name="Namath A."/>
            <person name="Oefner P."/>
            <person name="Oh C."/>
            <person name="Petel F.X."/>
            <person name="Roberts D."/>
            <person name="Schramm S."/>
            <person name="Schroeder M."/>
            <person name="Shogren T."/>
            <person name="Shroff N."/>
            <person name="Winant A."/>
            <person name="Yelton M.A."/>
            <person name="Botstein D."/>
            <person name="Davis R.W."/>
            <person name="Johnston M."/>
            <person name="Andrews S."/>
            <person name="Brinkman R."/>
            <person name="Cooper J."/>
            <person name="Ding H."/>
            <person name="Du Z."/>
            <person name="Favello A."/>
            <person name="Fulton L."/>
            <person name="Gattung S."/>
            <person name="Greco T."/>
            <person name="Hallsworth K."/>
            <person name="Hawkins J."/>
            <person name="Hillier L.W."/>
            <person name="Jier M."/>
            <person name="Johnson D."/>
            <person name="Johnston L."/>
            <person name="Kirsten J."/>
            <person name="Kucaba T."/>
            <person name="Langston Y."/>
            <person name="Latreille P."/>
            <person name="Le T."/>
            <person name="Mardis E."/>
            <person name="Menezes S."/>
            <person name="Miller N."/>
            <person name="Nhan M."/>
            <person name="Pauley A."/>
            <person name="Peluso D."/>
            <person name="Rifkin L."/>
            <person name="Riles L."/>
            <person name="Taich A."/>
            <person name="Trevaskis E."/>
            <person name="Vignati D."/>
            <person name="Wilcox L."/>
            <person name="Wohldman P."/>
            <person name="Vaudin M."/>
            <person name="Wilson R."/>
            <person name="Waterston R."/>
            <person name="Albermann K."/>
            <person name="Hani J."/>
            <person name="Heumann K."/>
            <person name="Kleine K."/>
            <person name="Mewes H.-W."/>
            <person name="Zollner A."/>
            <person name="Zaccaria P."/>
        </authorList>
    </citation>
    <scope>NUCLEOTIDE SEQUENCE [LARGE SCALE GENOMIC DNA]</scope>
    <source>
        <strain>ATCC 204508 / S288c</strain>
    </source>
</reference>
<reference key="2">
    <citation type="journal article" date="2014" name="G3 (Bethesda)">
        <title>The reference genome sequence of Saccharomyces cerevisiae: Then and now.</title>
        <authorList>
            <person name="Engel S.R."/>
            <person name="Dietrich F.S."/>
            <person name="Fisk D.G."/>
            <person name="Binkley G."/>
            <person name="Balakrishnan R."/>
            <person name="Costanzo M.C."/>
            <person name="Dwight S.S."/>
            <person name="Hitz B.C."/>
            <person name="Karra K."/>
            <person name="Nash R.S."/>
            <person name="Weng S."/>
            <person name="Wong E.D."/>
            <person name="Lloyd P."/>
            <person name="Skrzypek M.S."/>
            <person name="Miyasato S.R."/>
            <person name="Simison M."/>
            <person name="Cherry J.M."/>
        </authorList>
    </citation>
    <scope>GENOME REANNOTATION</scope>
    <source>
        <strain>ATCC 204508 / S288c</strain>
    </source>
</reference>
<reference key="3">
    <citation type="journal article" date="1997" name="Genetics">
        <title>Large scale identification of genes involved in cell surface biosynthesis and architecture in Saccharomyces cerevisiae.</title>
        <authorList>
            <person name="Lussier M."/>
            <person name="White A.-M."/>
            <person name="Sheraton J."/>
            <person name="di Paolo T."/>
            <person name="Treadwell J."/>
            <person name="Southard S.B."/>
            <person name="Horenstein C.I."/>
            <person name="Chen-Weiner J."/>
            <person name="Ram A.F.J."/>
            <person name="Kapteyn J.C."/>
            <person name="Roemer T.W."/>
            <person name="Vo D.H."/>
            <person name="Bondoc D.C."/>
            <person name="Hall J."/>
            <person name="Zhong W.-W."/>
            <person name="Sdicu A.-M."/>
            <person name="Davies J."/>
            <person name="Klis F.M."/>
            <person name="Robbins P.W."/>
            <person name="Bussey H."/>
        </authorList>
    </citation>
    <scope>IDENTIFICATION</scope>
</reference>
<reference key="4">
    <citation type="journal article" date="2000" name="Pflugers Arch.">
        <title>Interaction trap experiment with CDC6.</title>
        <authorList>
            <person name="Zavec P.B."/>
            <person name="Comino A."/>
            <person name="Watt P."/>
            <person name="Komel R."/>
        </authorList>
    </citation>
    <scope>INTERACTION WITH CDC6</scope>
</reference>
<reference key="5">
    <citation type="journal article" date="2001" name="Pflugers Arch.">
        <title>Ecm11 is located in the cell nucleus throughout mitosis.</title>
        <authorList>
            <person name="Comino A."/>
            <person name="Mancek M."/>
            <person name="Komel R."/>
        </authorList>
    </citation>
    <scope>SUBCELLULAR LOCATION</scope>
</reference>
<protein>
    <recommendedName>
        <fullName>Protein ECM11</fullName>
    </recommendedName>
    <alternativeName>
        <fullName>Extracellular mutant protein 11</fullName>
    </alternativeName>
</protein>
<gene>
    <name type="primary">ECM11</name>
    <name type="ordered locus">YDR446W</name>
    <name type="ORF">D9461.31</name>
</gene>
<accession>Q04110</accession>
<accession>D6VT71</accession>
<organism>
    <name type="scientific">Saccharomyces cerevisiae (strain ATCC 204508 / S288c)</name>
    <name type="common">Baker's yeast</name>
    <dbReference type="NCBI Taxonomy" id="559292"/>
    <lineage>
        <taxon>Eukaryota</taxon>
        <taxon>Fungi</taxon>
        <taxon>Dikarya</taxon>
        <taxon>Ascomycota</taxon>
        <taxon>Saccharomycotina</taxon>
        <taxon>Saccharomycetes</taxon>
        <taxon>Saccharomycetales</taxon>
        <taxon>Saccharomycetaceae</taxon>
        <taxon>Saccharomyces</taxon>
    </lineage>
</organism>
<keyword id="KW-0961">Cell wall biogenesis/degradation</keyword>
<keyword id="KW-0539">Nucleus</keyword>
<keyword id="KW-1185">Reference proteome</keyword>
<feature type="chain" id="PRO_0000086912" description="Protein ECM11">
    <location>
        <begin position="1"/>
        <end position="302"/>
    </location>
</feature>
<feature type="region of interest" description="Disordered" evidence="1">
    <location>
        <begin position="1"/>
        <end position="67"/>
    </location>
</feature>
<feature type="region of interest" description="Disordered" evidence="1">
    <location>
        <begin position="162"/>
        <end position="187"/>
    </location>
</feature>
<feature type="compositionally biased region" description="Polar residues" evidence="1">
    <location>
        <begin position="35"/>
        <end position="46"/>
    </location>
</feature>
<feature type="compositionally biased region" description="Basic and acidic residues" evidence="1">
    <location>
        <begin position="56"/>
        <end position="67"/>
    </location>
</feature>
<feature type="compositionally biased region" description="Polar residues" evidence="1">
    <location>
        <begin position="162"/>
        <end position="171"/>
    </location>
</feature>